<name>RL25_AERS4</name>
<organism>
    <name type="scientific">Aeromonas salmonicida (strain A449)</name>
    <dbReference type="NCBI Taxonomy" id="382245"/>
    <lineage>
        <taxon>Bacteria</taxon>
        <taxon>Pseudomonadati</taxon>
        <taxon>Pseudomonadota</taxon>
        <taxon>Gammaproteobacteria</taxon>
        <taxon>Aeromonadales</taxon>
        <taxon>Aeromonadaceae</taxon>
        <taxon>Aeromonas</taxon>
    </lineage>
</organism>
<protein>
    <recommendedName>
        <fullName evidence="1">Large ribosomal subunit protein bL25</fullName>
    </recommendedName>
    <alternativeName>
        <fullName evidence="2">50S ribosomal protein L25</fullName>
    </alternativeName>
</protein>
<gene>
    <name evidence="1" type="primary">rplY</name>
    <name type="ordered locus">ASA_2080</name>
</gene>
<feature type="chain" id="PRO_1000052948" description="Large ribosomal subunit protein bL25">
    <location>
        <begin position="1"/>
        <end position="95"/>
    </location>
</feature>
<reference key="1">
    <citation type="journal article" date="2008" name="BMC Genomics">
        <title>The genome of Aeromonas salmonicida subsp. salmonicida A449: insights into the evolution of a fish pathogen.</title>
        <authorList>
            <person name="Reith M.E."/>
            <person name="Singh R.K."/>
            <person name="Curtis B."/>
            <person name="Boyd J.M."/>
            <person name="Bouevitch A."/>
            <person name="Kimball J."/>
            <person name="Munholland J."/>
            <person name="Murphy C."/>
            <person name="Sarty D."/>
            <person name="Williams J."/>
            <person name="Nash J.H."/>
            <person name="Johnson S.C."/>
            <person name="Brown L.L."/>
        </authorList>
    </citation>
    <scope>NUCLEOTIDE SEQUENCE [LARGE SCALE GENOMIC DNA]</scope>
    <source>
        <strain>A449</strain>
    </source>
</reference>
<proteinExistence type="inferred from homology"/>
<comment type="function">
    <text evidence="1">This is one of the proteins that binds to the 5S RNA in the ribosome where it forms part of the central protuberance.</text>
</comment>
<comment type="subunit">
    <text evidence="1">Part of the 50S ribosomal subunit; part of the 5S rRNA/L5/L18/L25 subcomplex. Contacts the 5S rRNA. Binds to the 5S rRNA independently of L5 and L18.</text>
</comment>
<comment type="similarity">
    <text evidence="1">Belongs to the bacterial ribosomal protein bL25 family.</text>
</comment>
<accession>A4SMM4</accession>
<dbReference type="EMBL" id="CP000644">
    <property type="protein sequence ID" value="ABO90146.1"/>
    <property type="molecule type" value="Genomic_DNA"/>
</dbReference>
<dbReference type="RefSeq" id="WP_005311442.1">
    <property type="nucleotide sequence ID" value="NC_009348.1"/>
</dbReference>
<dbReference type="SMR" id="A4SMM4"/>
<dbReference type="STRING" id="29491.GCA_000820065_00690"/>
<dbReference type="GeneID" id="79879922"/>
<dbReference type="KEGG" id="asa:ASA_2080"/>
<dbReference type="eggNOG" id="COG1825">
    <property type="taxonomic scope" value="Bacteria"/>
</dbReference>
<dbReference type="HOGENOM" id="CLU_137946_0_0_6"/>
<dbReference type="Proteomes" id="UP000000225">
    <property type="component" value="Chromosome"/>
</dbReference>
<dbReference type="GO" id="GO:0022625">
    <property type="term" value="C:cytosolic large ribosomal subunit"/>
    <property type="evidence" value="ECO:0007669"/>
    <property type="project" value="TreeGrafter"/>
</dbReference>
<dbReference type="GO" id="GO:0008097">
    <property type="term" value="F:5S rRNA binding"/>
    <property type="evidence" value="ECO:0007669"/>
    <property type="project" value="InterPro"/>
</dbReference>
<dbReference type="GO" id="GO:0003735">
    <property type="term" value="F:structural constituent of ribosome"/>
    <property type="evidence" value="ECO:0007669"/>
    <property type="project" value="InterPro"/>
</dbReference>
<dbReference type="GO" id="GO:0006412">
    <property type="term" value="P:translation"/>
    <property type="evidence" value="ECO:0007669"/>
    <property type="project" value="UniProtKB-UniRule"/>
</dbReference>
<dbReference type="CDD" id="cd00495">
    <property type="entry name" value="Ribosomal_L25_TL5_CTC"/>
    <property type="match status" value="1"/>
</dbReference>
<dbReference type="FunFam" id="2.40.240.10:FF:000002">
    <property type="entry name" value="50S ribosomal protein L25"/>
    <property type="match status" value="1"/>
</dbReference>
<dbReference type="Gene3D" id="2.40.240.10">
    <property type="entry name" value="Ribosomal Protein L25, Chain P"/>
    <property type="match status" value="1"/>
</dbReference>
<dbReference type="HAMAP" id="MF_01336">
    <property type="entry name" value="Ribosomal_bL25"/>
    <property type="match status" value="1"/>
</dbReference>
<dbReference type="InterPro" id="IPR020056">
    <property type="entry name" value="Rbsml_bL25/Gln-tRNA_synth_N"/>
</dbReference>
<dbReference type="InterPro" id="IPR011035">
    <property type="entry name" value="Ribosomal_bL25/Gln-tRNA_synth"/>
</dbReference>
<dbReference type="InterPro" id="IPR001021">
    <property type="entry name" value="Ribosomal_bL25_long"/>
</dbReference>
<dbReference type="InterPro" id="IPR020055">
    <property type="entry name" value="Ribosomal_bL25_short"/>
</dbReference>
<dbReference type="InterPro" id="IPR029751">
    <property type="entry name" value="Ribosomal_L25_dom"/>
</dbReference>
<dbReference type="InterPro" id="IPR020930">
    <property type="entry name" value="Ribosomal_uL5_bac-type"/>
</dbReference>
<dbReference type="NCBIfam" id="TIGR00731">
    <property type="entry name" value="bL25_bact_ctc"/>
    <property type="match status" value="1"/>
</dbReference>
<dbReference type="NCBIfam" id="NF004612">
    <property type="entry name" value="PRK05943.1"/>
    <property type="match status" value="1"/>
</dbReference>
<dbReference type="PANTHER" id="PTHR33284">
    <property type="entry name" value="RIBOSOMAL PROTEIN L25/GLN-TRNA SYNTHETASE, ANTI-CODON-BINDING DOMAIN-CONTAINING PROTEIN"/>
    <property type="match status" value="1"/>
</dbReference>
<dbReference type="PANTHER" id="PTHR33284:SF1">
    <property type="entry name" value="RIBOSOMAL PROTEIN L25_GLN-TRNA SYNTHETASE, ANTI-CODON-BINDING DOMAIN-CONTAINING PROTEIN"/>
    <property type="match status" value="1"/>
</dbReference>
<dbReference type="Pfam" id="PF01386">
    <property type="entry name" value="Ribosomal_L25p"/>
    <property type="match status" value="1"/>
</dbReference>
<dbReference type="SUPFAM" id="SSF50715">
    <property type="entry name" value="Ribosomal protein L25-like"/>
    <property type="match status" value="1"/>
</dbReference>
<evidence type="ECO:0000255" key="1">
    <source>
        <dbReference type="HAMAP-Rule" id="MF_01336"/>
    </source>
</evidence>
<evidence type="ECO:0000305" key="2"/>
<keyword id="KW-0687">Ribonucleoprotein</keyword>
<keyword id="KW-0689">Ribosomal protein</keyword>
<keyword id="KW-0694">RNA-binding</keyword>
<keyword id="KW-0699">rRNA-binding</keyword>
<sequence>MSFVFQAEVRSDLGKGASRRLRHADQVPAIIYGAGKEAQSITVDHKKFIIAQEKPEFYESVLTLVINGEEVNVKVKAIQRHPVKPKLVHLDFVRV</sequence>